<comment type="function">
    <text evidence="1">Protease subunit of a proteasome-like degradation complex believed to be a general protein degrading machinery.</text>
</comment>
<comment type="catalytic activity">
    <reaction evidence="1">
        <text>ATP-dependent cleavage of peptide bonds with broad specificity.</text>
        <dbReference type="EC" id="3.4.25.2"/>
    </reaction>
</comment>
<comment type="activity regulation">
    <text evidence="1">Allosterically activated by HslU binding.</text>
</comment>
<comment type="subunit">
    <text evidence="1">A double ring-shaped homohexamer of HslV is capped on each side by a ring-shaped HslU homohexamer. The assembly of the HslU/HslV complex is dependent on binding of ATP.</text>
</comment>
<comment type="subcellular location">
    <subcellularLocation>
        <location evidence="1">Cytoplasm</location>
    </subcellularLocation>
</comment>
<comment type="similarity">
    <text evidence="1">Belongs to the peptidase T1B family. HslV subfamily.</text>
</comment>
<organism>
    <name type="scientific">Desulfovibrio desulfuricans (strain ATCC 27774 / DSM 6949 / MB)</name>
    <dbReference type="NCBI Taxonomy" id="525146"/>
    <lineage>
        <taxon>Bacteria</taxon>
        <taxon>Pseudomonadati</taxon>
        <taxon>Thermodesulfobacteriota</taxon>
        <taxon>Desulfovibrionia</taxon>
        <taxon>Desulfovibrionales</taxon>
        <taxon>Desulfovibrionaceae</taxon>
        <taxon>Desulfovibrio</taxon>
    </lineage>
</organism>
<sequence>METHATTILAVRKDGIVALAGDGQVTMGQTMIMKHAAQKVRRLHDGKILAGFAGATADAFTLFELFESKLKEVRGHMVRAAVEMTKDWRKDKYLRKLEAMLLLADREHILVLSGTGDVIEPDDNVAAIGSGGPYALAAARALSRHSGLDAETIARESMRIAAEICVYTNDHVTLETL</sequence>
<proteinExistence type="inferred from homology"/>
<dbReference type="EC" id="3.4.25.2" evidence="1"/>
<dbReference type="EMBL" id="CP001358">
    <property type="protein sequence ID" value="ACL49351.1"/>
    <property type="molecule type" value="Genomic_DNA"/>
</dbReference>
<dbReference type="SMR" id="B8J0S4"/>
<dbReference type="STRING" id="525146.Ddes_1449"/>
<dbReference type="MEROPS" id="T01.007"/>
<dbReference type="KEGG" id="dds:Ddes_1449"/>
<dbReference type="eggNOG" id="COG5405">
    <property type="taxonomic scope" value="Bacteria"/>
</dbReference>
<dbReference type="HOGENOM" id="CLU_093872_1_1_7"/>
<dbReference type="GO" id="GO:0009376">
    <property type="term" value="C:HslUV protease complex"/>
    <property type="evidence" value="ECO:0007669"/>
    <property type="project" value="UniProtKB-UniRule"/>
</dbReference>
<dbReference type="GO" id="GO:0005839">
    <property type="term" value="C:proteasome core complex"/>
    <property type="evidence" value="ECO:0007669"/>
    <property type="project" value="InterPro"/>
</dbReference>
<dbReference type="GO" id="GO:0046872">
    <property type="term" value="F:metal ion binding"/>
    <property type="evidence" value="ECO:0007669"/>
    <property type="project" value="UniProtKB-KW"/>
</dbReference>
<dbReference type="GO" id="GO:0004298">
    <property type="term" value="F:threonine-type endopeptidase activity"/>
    <property type="evidence" value="ECO:0007669"/>
    <property type="project" value="UniProtKB-KW"/>
</dbReference>
<dbReference type="GO" id="GO:0051603">
    <property type="term" value="P:proteolysis involved in protein catabolic process"/>
    <property type="evidence" value="ECO:0007669"/>
    <property type="project" value="InterPro"/>
</dbReference>
<dbReference type="CDD" id="cd01913">
    <property type="entry name" value="protease_HslV"/>
    <property type="match status" value="1"/>
</dbReference>
<dbReference type="Gene3D" id="3.60.20.10">
    <property type="entry name" value="Glutamine Phosphoribosylpyrophosphate, subunit 1, domain 1"/>
    <property type="match status" value="1"/>
</dbReference>
<dbReference type="HAMAP" id="MF_00248">
    <property type="entry name" value="HslV"/>
    <property type="match status" value="1"/>
</dbReference>
<dbReference type="InterPro" id="IPR022281">
    <property type="entry name" value="ATP-dep_Prtase_HsIV_su"/>
</dbReference>
<dbReference type="InterPro" id="IPR029055">
    <property type="entry name" value="Ntn_hydrolases_N"/>
</dbReference>
<dbReference type="InterPro" id="IPR001353">
    <property type="entry name" value="Proteasome_sua/b"/>
</dbReference>
<dbReference type="InterPro" id="IPR023333">
    <property type="entry name" value="Proteasome_suB-type"/>
</dbReference>
<dbReference type="NCBIfam" id="TIGR03692">
    <property type="entry name" value="ATP_dep_HslV"/>
    <property type="match status" value="1"/>
</dbReference>
<dbReference type="NCBIfam" id="NF003964">
    <property type="entry name" value="PRK05456.1"/>
    <property type="match status" value="1"/>
</dbReference>
<dbReference type="PANTHER" id="PTHR32194:SF0">
    <property type="entry name" value="ATP-DEPENDENT PROTEASE SUBUNIT HSLV"/>
    <property type="match status" value="1"/>
</dbReference>
<dbReference type="PANTHER" id="PTHR32194">
    <property type="entry name" value="METALLOPROTEASE TLDD"/>
    <property type="match status" value="1"/>
</dbReference>
<dbReference type="Pfam" id="PF00227">
    <property type="entry name" value="Proteasome"/>
    <property type="match status" value="1"/>
</dbReference>
<dbReference type="PIRSF" id="PIRSF039093">
    <property type="entry name" value="HslV"/>
    <property type="match status" value="1"/>
</dbReference>
<dbReference type="SUPFAM" id="SSF56235">
    <property type="entry name" value="N-terminal nucleophile aminohydrolases (Ntn hydrolases)"/>
    <property type="match status" value="1"/>
</dbReference>
<dbReference type="PROSITE" id="PS51476">
    <property type="entry name" value="PROTEASOME_BETA_2"/>
    <property type="match status" value="1"/>
</dbReference>
<reference key="1">
    <citation type="submission" date="2009-01" db="EMBL/GenBank/DDBJ databases">
        <title>Complete sequence of Desulfovibrio desulfuricans subsp. desulfuricans str. ATCC 27774.</title>
        <authorList>
            <consortium name="US DOE Joint Genome Institute"/>
            <person name="Lucas S."/>
            <person name="Copeland A."/>
            <person name="Lapidus A."/>
            <person name="Glavina del Rio T."/>
            <person name="Tice H."/>
            <person name="Bruce D."/>
            <person name="Goodwin L."/>
            <person name="Pitluck S."/>
            <person name="Sims D."/>
            <person name="Lu M."/>
            <person name="Kiss H."/>
            <person name="Meineke L."/>
            <person name="Brettin T."/>
            <person name="Detter J.C."/>
            <person name="Han C."/>
            <person name="Larimer F."/>
            <person name="Land M."/>
            <person name="Hauser L."/>
            <person name="Kyrpides N."/>
            <person name="Ovchinnikova G."/>
            <person name="Hazen T.C."/>
        </authorList>
    </citation>
    <scope>NUCLEOTIDE SEQUENCE [LARGE SCALE GENOMIC DNA]</scope>
    <source>
        <strain>ATCC 27774 / DSM 6949 / MB</strain>
    </source>
</reference>
<gene>
    <name evidence="1" type="primary">hslV</name>
    <name type="ordered locus">Ddes_1449</name>
</gene>
<evidence type="ECO:0000255" key="1">
    <source>
        <dbReference type="HAMAP-Rule" id="MF_00248"/>
    </source>
</evidence>
<name>HSLV_DESDA</name>
<keyword id="KW-0021">Allosteric enzyme</keyword>
<keyword id="KW-0963">Cytoplasm</keyword>
<keyword id="KW-0378">Hydrolase</keyword>
<keyword id="KW-0479">Metal-binding</keyword>
<keyword id="KW-0645">Protease</keyword>
<keyword id="KW-0915">Sodium</keyword>
<keyword id="KW-0888">Threonine protease</keyword>
<feature type="chain" id="PRO_1000125403" description="ATP-dependent protease subunit HslV">
    <location>
        <begin position="1"/>
        <end position="177"/>
    </location>
</feature>
<feature type="active site" evidence="1">
    <location>
        <position position="6"/>
    </location>
</feature>
<feature type="binding site" evidence="1">
    <location>
        <position position="162"/>
    </location>
    <ligand>
        <name>Na(+)</name>
        <dbReference type="ChEBI" id="CHEBI:29101"/>
    </ligand>
</feature>
<feature type="binding site" evidence="1">
    <location>
        <position position="165"/>
    </location>
    <ligand>
        <name>Na(+)</name>
        <dbReference type="ChEBI" id="CHEBI:29101"/>
    </ligand>
</feature>
<feature type="binding site" evidence="1">
    <location>
        <position position="168"/>
    </location>
    <ligand>
        <name>Na(+)</name>
        <dbReference type="ChEBI" id="CHEBI:29101"/>
    </ligand>
</feature>
<accession>B8J0S4</accession>
<protein>
    <recommendedName>
        <fullName evidence="1">ATP-dependent protease subunit HslV</fullName>
        <ecNumber evidence="1">3.4.25.2</ecNumber>
    </recommendedName>
</protein>